<protein>
    <recommendedName>
        <fullName evidence="1">Ribosome-recycling factor</fullName>
        <shortName evidence="1">RRF</shortName>
    </recommendedName>
    <alternativeName>
        <fullName evidence="1">Ribosome-releasing factor</fullName>
    </alternativeName>
</protein>
<comment type="function">
    <text evidence="1">Responsible for the release of ribosomes from messenger RNA at the termination of protein biosynthesis. May increase the efficiency of translation by recycling ribosomes from one round of translation to another.</text>
</comment>
<comment type="subcellular location">
    <subcellularLocation>
        <location evidence="1">Cytoplasm</location>
    </subcellularLocation>
</comment>
<comment type="similarity">
    <text evidence="1">Belongs to the RRF family.</text>
</comment>
<name>RRF_BACC1</name>
<sequence>MGQQVLKSANEKMEKAVAAYSRELATVRAGRANASVLDKVQVDYYGAPTPVVQLANITVPEARLLVIQPYDKTSIGDIEKAILKADLGLNPSNDGTVIRIAFPALTEERRRDLVKVVKKYAEEAKVAVRNVRRDGNDDLKKLEKAGEITEDDLRGYTEDIQKETDKYIAKVDEIAKNKEKEIMEV</sequence>
<organism>
    <name type="scientific">Bacillus cereus (strain ATCC 10987 / NRS 248)</name>
    <dbReference type="NCBI Taxonomy" id="222523"/>
    <lineage>
        <taxon>Bacteria</taxon>
        <taxon>Bacillati</taxon>
        <taxon>Bacillota</taxon>
        <taxon>Bacilli</taxon>
        <taxon>Bacillales</taxon>
        <taxon>Bacillaceae</taxon>
        <taxon>Bacillus</taxon>
        <taxon>Bacillus cereus group</taxon>
    </lineage>
</organism>
<feature type="chain" id="PRO_0000167403" description="Ribosome-recycling factor">
    <location>
        <begin position="1"/>
        <end position="185"/>
    </location>
</feature>
<reference key="1">
    <citation type="journal article" date="2004" name="Nucleic Acids Res.">
        <title>The genome sequence of Bacillus cereus ATCC 10987 reveals metabolic adaptations and a large plasmid related to Bacillus anthracis pXO1.</title>
        <authorList>
            <person name="Rasko D.A."/>
            <person name="Ravel J."/>
            <person name="Oekstad O.A."/>
            <person name="Helgason E."/>
            <person name="Cer R.Z."/>
            <person name="Jiang L."/>
            <person name="Shores K.A."/>
            <person name="Fouts D.E."/>
            <person name="Tourasse N.J."/>
            <person name="Angiuoli S.V."/>
            <person name="Kolonay J.F."/>
            <person name="Nelson W.C."/>
            <person name="Kolstoe A.-B."/>
            <person name="Fraser C.M."/>
            <person name="Read T.D."/>
        </authorList>
    </citation>
    <scope>NUCLEOTIDE SEQUENCE [LARGE SCALE GENOMIC DNA]</scope>
    <source>
        <strain>ATCC 10987 / NRS 248</strain>
    </source>
</reference>
<proteinExistence type="inferred from homology"/>
<gene>
    <name evidence="1" type="primary">frr</name>
    <name type="ordered locus">BCE_3865</name>
</gene>
<dbReference type="EMBL" id="AE017194">
    <property type="protein sequence ID" value="AAS42770.1"/>
    <property type="molecule type" value="Genomic_DNA"/>
</dbReference>
<dbReference type="SMR" id="Q732P5"/>
<dbReference type="KEGG" id="bca:BCE_3865"/>
<dbReference type="HOGENOM" id="CLU_073981_2_0_9"/>
<dbReference type="Proteomes" id="UP000002527">
    <property type="component" value="Chromosome"/>
</dbReference>
<dbReference type="GO" id="GO:0005737">
    <property type="term" value="C:cytoplasm"/>
    <property type="evidence" value="ECO:0007669"/>
    <property type="project" value="UniProtKB-SubCell"/>
</dbReference>
<dbReference type="GO" id="GO:0043023">
    <property type="term" value="F:ribosomal large subunit binding"/>
    <property type="evidence" value="ECO:0007669"/>
    <property type="project" value="TreeGrafter"/>
</dbReference>
<dbReference type="GO" id="GO:0006415">
    <property type="term" value="P:translational termination"/>
    <property type="evidence" value="ECO:0007669"/>
    <property type="project" value="UniProtKB-UniRule"/>
</dbReference>
<dbReference type="CDD" id="cd00520">
    <property type="entry name" value="RRF"/>
    <property type="match status" value="1"/>
</dbReference>
<dbReference type="FunFam" id="1.10.132.20:FF:000001">
    <property type="entry name" value="Ribosome-recycling factor"/>
    <property type="match status" value="1"/>
</dbReference>
<dbReference type="FunFam" id="3.30.1360.40:FF:000001">
    <property type="entry name" value="Ribosome-recycling factor"/>
    <property type="match status" value="1"/>
</dbReference>
<dbReference type="Gene3D" id="3.30.1360.40">
    <property type="match status" value="1"/>
</dbReference>
<dbReference type="Gene3D" id="1.10.132.20">
    <property type="entry name" value="Ribosome-recycling factor"/>
    <property type="match status" value="1"/>
</dbReference>
<dbReference type="HAMAP" id="MF_00040">
    <property type="entry name" value="RRF"/>
    <property type="match status" value="1"/>
</dbReference>
<dbReference type="InterPro" id="IPR002661">
    <property type="entry name" value="Ribosome_recyc_fac"/>
</dbReference>
<dbReference type="InterPro" id="IPR023584">
    <property type="entry name" value="Ribosome_recyc_fac_dom"/>
</dbReference>
<dbReference type="InterPro" id="IPR036191">
    <property type="entry name" value="RRF_sf"/>
</dbReference>
<dbReference type="NCBIfam" id="TIGR00496">
    <property type="entry name" value="frr"/>
    <property type="match status" value="1"/>
</dbReference>
<dbReference type="PANTHER" id="PTHR20982:SF3">
    <property type="entry name" value="MITOCHONDRIAL RIBOSOME RECYCLING FACTOR PSEUDO 1"/>
    <property type="match status" value="1"/>
</dbReference>
<dbReference type="PANTHER" id="PTHR20982">
    <property type="entry name" value="RIBOSOME RECYCLING FACTOR"/>
    <property type="match status" value="1"/>
</dbReference>
<dbReference type="Pfam" id="PF01765">
    <property type="entry name" value="RRF"/>
    <property type="match status" value="1"/>
</dbReference>
<dbReference type="SUPFAM" id="SSF55194">
    <property type="entry name" value="Ribosome recycling factor, RRF"/>
    <property type="match status" value="1"/>
</dbReference>
<evidence type="ECO:0000255" key="1">
    <source>
        <dbReference type="HAMAP-Rule" id="MF_00040"/>
    </source>
</evidence>
<accession>Q732P5</accession>
<keyword id="KW-0963">Cytoplasm</keyword>
<keyword id="KW-0648">Protein biosynthesis</keyword>